<reference key="1">
    <citation type="journal article" date="1993" name="J. Bacteriol.">
        <title>Menaquinone (vitamin K2) biosynthesis: cloning, nucleotide sequence, and expression of the menC gene from Escherichia coli.</title>
        <authorList>
            <person name="Sharma V."/>
            <person name="Meganathan R."/>
            <person name="Hudspeth M.E.S."/>
        </authorList>
    </citation>
    <scope>NUCLEOTIDE SEQUENCE [GENOMIC DNA]</scope>
    <scope>FUNCTION</scope>
    <scope>CATALYTIC ACTIVITY</scope>
    <scope>PATHWAY</scope>
    <source>
        <strain>K12</strain>
    </source>
</reference>
<reference key="2">
    <citation type="journal article" date="1997" name="DNA Res.">
        <title>Construction of a contiguous 874-kb sequence of the Escherichia coli-K12 genome corresponding to 50.0-68.8 min on the linkage map and analysis of its sequence features.</title>
        <authorList>
            <person name="Yamamoto Y."/>
            <person name="Aiba H."/>
            <person name="Baba T."/>
            <person name="Hayashi K."/>
            <person name="Inada T."/>
            <person name="Isono K."/>
            <person name="Itoh T."/>
            <person name="Kimura S."/>
            <person name="Kitagawa M."/>
            <person name="Makino K."/>
            <person name="Miki T."/>
            <person name="Mitsuhashi N."/>
            <person name="Mizobuchi K."/>
            <person name="Mori H."/>
            <person name="Nakade S."/>
            <person name="Nakamura Y."/>
            <person name="Nashimoto H."/>
            <person name="Oshima T."/>
            <person name="Oyama S."/>
            <person name="Saito N."/>
            <person name="Sampei G."/>
            <person name="Satoh Y."/>
            <person name="Sivasundaram S."/>
            <person name="Tagami H."/>
            <person name="Takahashi H."/>
            <person name="Takeda J."/>
            <person name="Takemoto K."/>
            <person name="Uehara K."/>
            <person name="Wada C."/>
            <person name="Yamagata S."/>
            <person name="Horiuchi T."/>
        </authorList>
    </citation>
    <scope>NUCLEOTIDE SEQUENCE [LARGE SCALE GENOMIC DNA]</scope>
    <source>
        <strain>K12 / W3110 / ATCC 27325 / DSM 5911</strain>
    </source>
</reference>
<reference key="3">
    <citation type="journal article" date="1997" name="Science">
        <title>The complete genome sequence of Escherichia coli K-12.</title>
        <authorList>
            <person name="Blattner F.R."/>
            <person name="Plunkett G. III"/>
            <person name="Bloch C.A."/>
            <person name="Perna N.T."/>
            <person name="Burland V."/>
            <person name="Riley M."/>
            <person name="Collado-Vides J."/>
            <person name="Glasner J.D."/>
            <person name="Rode C.K."/>
            <person name="Mayhew G.F."/>
            <person name="Gregor J."/>
            <person name="Davis N.W."/>
            <person name="Kirkpatrick H.A."/>
            <person name="Goeden M.A."/>
            <person name="Rose D.J."/>
            <person name="Mau B."/>
            <person name="Shao Y."/>
        </authorList>
    </citation>
    <scope>NUCLEOTIDE SEQUENCE [LARGE SCALE GENOMIC DNA]</scope>
    <source>
        <strain>K12 / MG1655 / ATCC 47076</strain>
    </source>
</reference>
<reference key="4">
    <citation type="journal article" date="2006" name="Mol. Syst. Biol.">
        <title>Highly accurate genome sequences of Escherichia coli K-12 strains MG1655 and W3110.</title>
        <authorList>
            <person name="Hayashi K."/>
            <person name="Morooka N."/>
            <person name="Yamamoto Y."/>
            <person name="Fujita K."/>
            <person name="Isono K."/>
            <person name="Choi S."/>
            <person name="Ohtsubo E."/>
            <person name="Baba T."/>
            <person name="Wanner B.L."/>
            <person name="Mori H."/>
            <person name="Horiuchi T."/>
        </authorList>
    </citation>
    <scope>NUCLEOTIDE SEQUENCE [LARGE SCALE GENOMIC DNA]</scope>
    <source>
        <strain>K12 / W3110 / ATCC 27325 / DSM 5911</strain>
    </source>
</reference>
<reference key="5">
    <citation type="journal article" date="1999" name="Biochemistry">
        <title>Unexpected divergence of enzyme function and sequence: 'N-acylamino acid racemase' is o-succinylbenzoate synthase.</title>
        <authorList>
            <person name="Palmer D.R."/>
            <person name="Garrett J.B."/>
            <person name="Sharma V."/>
            <person name="Meganathan R."/>
            <person name="Babbitt P.C."/>
            <person name="Gerlt J.A."/>
        </authorList>
    </citation>
    <scope>FUNCTION</scope>
    <scope>CATALYTIC ACTIVITY</scope>
    <scope>BIOPHYSICOCHEMICAL PROPERTIES</scope>
</reference>
<reference key="6">
    <citation type="journal article" date="2000" name="Biochemistry">
        <title>Evolution of enzymatic activity in the enolase superfamily: structure of o-succinylbenzoate synthase from Escherichia coli in complex with Mg(2+) and o-Succinylbenzoate.</title>
        <authorList>
            <person name="Thompson T.B."/>
            <person name="Garrett J.B."/>
            <person name="Taylor E.A."/>
            <person name="Meganathan R."/>
            <person name="Gerlt J.A."/>
            <person name="Rayment I."/>
        </authorList>
    </citation>
    <scope>X-RAY CRYSTALLOGRAPHY (1.65 ANGSTROMS) IN COMPLEX WITH 2-SUCCINYLBENZOIC ACID AND MAGNESIUM</scope>
    <scope>COFACTOR</scope>
    <scope>ACTIVE SITES</scope>
</reference>
<feature type="chain" id="PRO_0000171270" description="o-succinylbenzoate synthase">
    <location>
        <begin position="1"/>
        <end position="320"/>
    </location>
</feature>
<feature type="active site" description="Proton donor" evidence="1 3">
    <location>
        <position position="133"/>
    </location>
</feature>
<feature type="active site" description="Proton acceptor" evidence="1 3">
    <location>
        <position position="235"/>
    </location>
</feature>
<feature type="binding site" evidence="1 3">
    <location>
        <position position="161"/>
    </location>
    <ligand>
        <name>Mg(2+)</name>
        <dbReference type="ChEBI" id="CHEBI:18420"/>
    </ligand>
</feature>
<feature type="binding site" evidence="1 3">
    <location>
        <position position="190"/>
    </location>
    <ligand>
        <name>Mg(2+)</name>
        <dbReference type="ChEBI" id="CHEBI:18420"/>
    </ligand>
</feature>
<feature type="binding site" evidence="1 3">
    <location>
        <position position="213"/>
    </location>
    <ligand>
        <name>Mg(2+)</name>
        <dbReference type="ChEBI" id="CHEBI:18420"/>
    </ligand>
</feature>
<feature type="sequence conflict" description="In Ref. 1; AAA71917." evidence="7" ref="1">
    <location>
        <begin position="176"/>
        <end position="177"/>
    </location>
</feature>
<feature type="strand" evidence="9">
    <location>
        <begin position="2"/>
        <end position="13"/>
    </location>
</feature>
<feature type="strand" evidence="9">
    <location>
        <begin position="26"/>
        <end position="36"/>
    </location>
</feature>
<feature type="strand" evidence="9">
    <location>
        <begin position="39"/>
        <end position="45"/>
    </location>
</feature>
<feature type="turn" evidence="9">
    <location>
        <begin position="49"/>
        <end position="51"/>
    </location>
</feature>
<feature type="strand" evidence="8">
    <location>
        <begin position="52"/>
        <end position="54"/>
    </location>
</feature>
<feature type="helix" evidence="9">
    <location>
        <begin position="56"/>
        <end position="70"/>
    </location>
</feature>
<feature type="helix" evidence="9">
    <location>
        <begin position="81"/>
        <end position="94"/>
    </location>
</feature>
<feature type="strand" evidence="8">
    <location>
        <begin position="109"/>
        <end position="111"/>
    </location>
</feature>
<feature type="helix" evidence="9">
    <location>
        <begin position="114"/>
        <end position="122"/>
    </location>
</feature>
<feature type="strand" evidence="9">
    <location>
        <begin position="126"/>
        <end position="133"/>
    </location>
</feature>
<feature type="strand" evidence="9">
    <location>
        <begin position="135"/>
        <end position="137"/>
    </location>
</feature>
<feature type="helix" evidence="9">
    <location>
        <begin position="139"/>
        <end position="152"/>
    </location>
</feature>
<feature type="strand" evidence="9">
    <location>
        <begin position="156"/>
        <end position="161"/>
    </location>
</feature>
<feature type="helix" evidence="9">
    <location>
        <begin position="168"/>
        <end position="176"/>
    </location>
</feature>
<feature type="turn" evidence="9">
    <location>
        <begin position="180"/>
        <end position="182"/>
    </location>
</feature>
<feature type="helix" evidence="9">
    <location>
        <begin position="183"/>
        <end position="185"/>
    </location>
</feature>
<feature type="strand" evidence="9">
    <location>
        <begin position="186"/>
        <end position="190"/>
    </location>
</feature>
<feature type="strand" evidence="9">
    <location>
        <begin position="193"/>
        <end position="195"/>
    </location>
</feature>
<feature type="helix" evidence="9">
    <location>
        <begin position="196"/>
        <end position="206"/>
    </location>
</feature>
<feature type="strand" evidence="9">
    <location>
        <begin position="210"/>
        <end position="213"/>
    </location>
</feature>
<feature type="helix" evidence="9">
    <location>
        <begin position="214"/>
        <end position="217"/>
    </location>
</feature>
<feature type="strand" evidence="9">
    <location>
        <begin position="229"/>
        <end position="234"/>
    </location>
</feature>
<feature type="helix" evidence="9">
    <location>
        <begin position="236"/>
        <end position="239"/>
    </location>
</feature>
<feature type="helix" evidence="9">
    <location>
        <begin position="242"/>
        <end position="254"/>
    </location>
</feature>
<feature type="strand" evidence="9">
    <location>
        <begin position="258"/>
        <end position="262"/>
    </location>
</feature>
<feature type="helix" evidence="9">
    <location>
        <begin position="268"/>
        <end position="281"/>
    </location>
</feature>
<feature type="helix" evidence="9">
    <location>
        <begin position="292"/>
        <end position="294"/>
    </location>
</feature>
<feature type="strand" evidence="9">
    <location>
        <begin position="298"/>
        <end position="301"/>
    </location>
</feature>
<feature type="helix" evidence="9">
    <location>
        <begin position="313"/>
        <end position="315"/>
    </location>
</feature>
<feature type="strand" evidence="9">
    <location>
        <begin position="316"/>
        <end position="318"/>
    </location>
</feature>
<comment type="function">
    <text evidence="2 4">Converts 2-succinyl-6-hydroxy-2,4-cyclohexadiene-1-carboxylate (SHCHC) to 2-succinylbenzoate (OSB) (PubMed:10194342, PubMed:8335646). Does not show detectable N-acylamino acid racemase (NAAAR) activity with N-acetyl-S-methionine as substrate (PubMed:10194342).</text>
</comment>
<comment type="catalytic activity">
    <reaction evidence="1 2 4">
        <text>(1R,6R)-6-hydroxy-2-succinyl-cyclohexa-2,4-diene-1-carboxylate = 2-succinylbenzoate + H2O</text>
        <dbReference type="Rhea" id="RHEA:10196"/>
        <dbReference type="ChEBI" id="CHEBI:15377"/>
        <dbReference type="ChEBI" id="CHEBI:18325"/>
        <dbReference type="ChEBI" id="CHEBI:58689"/>
        <dbReference type="EC" id="4.2.1.113"/>
    </reaction>
</comment>
<comment type="cofactor">
    <cofactor evidence="3">
        <name>Mg(2+)</name>
        <dbReference type="ChEBI" id="CHEBI:18420"/>
    </cofactor>
</comment>
<comment type="biophysicochemical properties">
    <kinetics>
        <text evidence="2">kcat is 19 sec(-1) with SHCHC as substrate.</text>
    </kinetics>
</comment>
<comment type="pathway">
    <text evidence="1 4">Quinol/quinone metabolism; 1,4-dihydroxy-2-naphthoate biosynthesis; 1,4-dihydroxy-2-naphthoate from chorismate: step 4/7.</text>
</comment>
<comment type="pathway">
    <text evidence="1 4">Quinol/quinone metabolism; menaquinone biosynthesis.</text>
</comment>
<comment type="similarity">
    <text evidence="1 7">Belongs to the mandelate racemase/muconate lactonizing enzyme family. MenC type 1 subfamily.</text>
</comment>
<sequence length="320" mass="35477">MRSAQVYRWQIPMDAGVVLRDRRLKTRDGLYVCLREGEREGWGEISPLPGFSQETWEEAQSVLLAWVNNWLAGDCELPQMPSVAFGVSCALAELTDTLPQAANYRAAPLCNGDPDDLILKLADMPGEKVAKVKVGLYEAVRDGMVVNLLLEAIPDLHLRLDANRAWTPLKGQQFAKYVNPDYRDRIAFLEEPCKTRDDSRAFARETGIAIAWDESLREPDFAFVAEEGVRAVVIKPTLTGSLEKVREQVQAAHALGLTAVISSSIESSLGLTQLARIAAWLTPDTIPGLDTLDLMQAQQVRRWPGSTLPVVEVDALERLL</sequence>
<organism>
    <name type="scientific">Escherichia coli (strain K12)</name>
    <dbReference type="NCBI Taxonomy" id="83333"/>
    <lineage>
        <taxon>Bacteria</taxon>
        <taxon>Pseudomonadati</taxon>
        <taxon>Pseudomonadota</taxon>
        <taxon>Gammaproteobacteria</taxon>
        <taxon>Enterobacterales</taxon>
        <taxon>Enterobacteriaceae</taxon>
        <taxon>Escherichia</taxon>
    </lineage>
</organism>
<keyword id="KW-0002">3D-structure</keyword>
<keyword id="KW-0456">Lyase</keyword>
<keyword id="KW-0460">Magnesium</keyword>
<keyword id="KW-0474">Menaquinone biosynthesis</keyword>
<keyword id="KW-0479">Metal-binding</keyword>
<keyword id="KW-1185">Reference proteome</keyword>
<dbReference type="EC" id="4.2.1.113" evidence="1 2 4"/>
<dbReference type="EMBL" id="L07256">
    <property type="protein sequence ID" value="AAA71917.1"/>
    <property type="molecule type" value="Unassigned_DNA"/>
</dbReference>
<dbReference type="EMBL" id="U00096">
    <property type="protein sequence ID" value="AAC75321.1"/>
    <property type="molecule type" value="Genomic_DNA"/>
</dbReference>
<dbReference type="EMBL" id="AP009048">
    <property type="protein sequence ID" value="BAA16085.2"/>
    <property type="molecule type" value="Genomic_DNA"/>
</dbReference>
<dbReference type="PIR" id="C64997">
    <property type="entry name" value="C64997"/>
</dbReference>
<dbReference type="RefSeq" id="NP_416764.1">
    <property type="nucleotide sequence ID" value="NC_000913.3"/>
</dbReference>
<dbReference type="RefSeq" id="WP_001255628.1">
    <property type="nucleotide sequence ID" value="NZ_LN832404.1"/>
</dbReference>
<dbReference type="PDB" id="1FHU">
    <property type="method" value="X-ray"/>
    <property type="resolution" value="1.65 A"/>
    <property type="chains" value="A=1-320"/>
</dbReference>
<dbReference type="PDB" id="1FHV">
    <property type="method" value="X-ray"/>
    <property type="resolution" value="1.77 A"/>
    <property type="chains" value="A=1-320"/>
</dbReference>
<dbReference type="PDB" id="1R6W">
    <property type="method" value="X-ray"/>
    <property type="resolution" value="1.62 A"/>
    <property type="chains" value="A=1-320"/>
</dbReference>
<dbReference type="PDB" id="2OFJ">
    <property type="method" value="X-ray"/>
    <property type="resolution" value="2.30 A"/>
    <property type="chains" value="A/B/C/D=1-320"/>
</dbReference>
<dbReference type="PDBsum" id="1FHU"/>
<dbReference type="PDBsum" id="1FHV"/>
<dbReference type="PDBsum" id="1R6W"/>
<dbReference type="PDBsum" id="2OFJ"/>
<dbReference type="SMR" id="P29208"/>
<dbReference type="BioGRID" id="4260503">
    <property type="interactions" value="28"/>
</dbReference>
<dbReference type="FunCoup" id="P29208">
    <property type="interactions" value="146"/>
</dbReference>
<dbReference type="IntAct" id="P29208">
    <property type="interactions" value="5"/>
</dbReference>
<dbReference type="STRING" id="511145.b2261"/>
<dbReference type="BindingDB" id="P29208"/>
<dbReference type="DrugBank" id="DB06864">
    <property type="generic name" value="2-(3-CARBOXYPROPIONYL)-6-HYDROXY-CYCLOHEXA-2,4-DIENE CARBOXYLIC ACID"/>
</dbReference>
<dbReference type="DrugBank" id="DB02251">
    <property type="generic name" value="O-Succinylbenzoate"/>
</dbReference>
<dbReference type="jPOST" id="P29208"/>
<dbReference type="PaxDb" id="511145-b2261"/>
<dbReference type="EnsemblBacteria" id="AAC75321">
    <property type="protein sequence ID" value="AAC75321"/>
    <property type="gene ID" value="b2261"/>
</dbReference>
<dbReference type="GeneID" id="946734"/>
<dbReference type="KEGG" id="ecj:JW2256"/>
<dbReference type="KEGG" id="eco:b2261"/>
<dbReference type="KEGG" id="ecoc:C3026_12630"/>
<dbReference type="PATRIC" id="fig|1411691.4.peg.4475"/>
<dbReference type="EchoBASE" id="EB1494"/>
<dbReference type="eggNOG" id="COG1441">
    <property type="taxonomic scope" value="Bacteria"/>
</dbReference>
<dbReference type="HOGENOM" id="CLU_030273_0_1_6"/>
<dbReference type="InParanoid" id="P29208"/>
<dbReference type="OMA" id="PLCYGDP"/>
<dbReference type="OrthoDB" id="3725747at2"/>
<dbReference type="PhylomeDB" id="P29208"/>
<dbReference type="BioCyc" id="EcoCyc:O-SUCCINYLBENZOATE-COA-SYN-MONOMER"/>
<dbReference type="BioCyc" id="MetaCyc:O-SUCCINYLBENZOATE-COA-SYN-MONOMER"/>
<dbReference type="BRENDA" id="4.2.1.113">
    <property type="organism ID" value="2026"/>
</dbReference>
<dbReference type="SABIO-RK" id="P29208"/>
<dbReference type="UniPathway" id="UPA00079"/>
<dbReference type="UniPathway" id="UPA01057">
    <property type="reaction ID" value="UER00165"/>
</dbReference>
<dbReference type="EvolutionaryTrace" id="P29208"/>
<dbReference type="PRO" id="PR:P29208"/>
<dbReference type="Proteomes" id="UP000000625">
    <property type="component" value="Chromosome"/>
</dbReference>
<dbReference type="GO" id="GO:0016836">
    <property type="term" value="F:hydro-lyase activity"/>
    <property type="evidence" value="ECO:0000314"/>
    <property type="project" value="EcoCyc"/>
</dbReference>
<dbReference type="GO" id="GO:0000287">
    <property type="term" value="F:magnesium ion binding"/>
    <property type="evidence" value="ECO:0007669"/>
    <property type="project" value="UniProtKB-UniRule"/>
</dbReference>
<dbReference type="GO" id="GO:0043748">
    <property type="term" value="F:O-succinylbenzoate synthase activity"/>
    <property type="evidence" value="ECO:0007669"/>
    <property type="project" value="UniProtKB-EC"/>
</dbReference>
<dbReference type="GO" id="GO:0009234">
    <property type="term" value="P:menaquinone biosynthetic process"/>
    <property type="evidence" value="ECO:0000315"/>
    <property type="project" value="EcoCyc"/>
</dbReference>
<dbReference type="CDD" id="cd03320">
    <property type="entry name" value="OSBS"/>
    <property type="match status" value="1"/>
</dbReference>
<dbReference type="FunFam" id="3.20.20.120:FF:000006">
    <property type="entry name" value="o-succinylbenzoate synthase"/>
    <property type="match status" value="1"/>
</dbReference>
<dbReference type="FunFam" id="3.30.390.10:FF:000005">
    <property type="entry name" value="o-succinylbenzoate synthase"/>
    <property type="match status" value="1"/>
</dbReference>
<dbReference type="Gene3D" id="3.20.20.120">
    <property type="entry name" value="Enolase-like C-terminal domain"/>
    <property type="match status" value="1"/>
</dbReference>
<dbReference type="Gene3D" id="3.30.390.10">
    <property type="entry name" value="Enolase-like, N-terminal domain"/>
    <property type="match status" value="1"/>
</dbReference>
<dbReference type="HAMAP" id="MF_00470">
    <property type="entry name" value="MenC_1"/>
    <property type="match status" value="1"/>
</dbReference>
<dbReference type="InterPro" id="IPR036849">
    <property type="entry name" value="Enolase-like_C_sf"/>
</dbReference>
<dbReference type="InterPro" id="IPR029017">
    <property type="entry name" value="Enolase-like_N"/>
</dbReference>
<dbReference type="InterPro" id="IPR029065">
    <property type="entry name" value="Enolase_C-like"/>
</dbReference>
<dbReference type="InterPro" id="IPR013342">
    <property type="entry name" value="Mandelate_racemase_C"/>
</dbReference>
<dbReference type="InterPro" id="IPR010196">
    <property type="entry name" value="OSB_synthase_MenC1"/>
</dbReference>
<dbReference type="InterPro" id="IPR041338">
    <property type="entry name" value="OSBS_N"/>
</dbReference>
<dbReference type="NCBIfam" id="TIGR01927">
    <property type="entry name" value="menC_gam_Gplu"/>
    <property type="match status" value="1"/>
</dbReference>
<dbReference type="NCBIfam" id="NF003473">
    <property type="entry name" value="PRK05105.1"/>
    <property type="match status" value="1"/>
</dbReference>
<dbReference type="PANTHER" id="PTHR48073:SF2">
    <property type="entry name" value="O-SUCCINYLBENZOATE SYNTHASE"/>
    <property type="match status" value="1"/>
</dbReference>
<dbReference type="PANTHER" id="PTHR48073">
    <property type="entry name" value="O-SUCCINYLBENZOATE SYNTHASE-RELATED"/>
    <property type="match status" value="1"/>
</dbReference>
<dbReference type="Pfam" id="PF21508">
    <property type="entry name" value="MenC_N"/>
    <property type="match status" value="1"/>
</dbReference>
<dbReference type="Pfam" id="PF13378">
    <property type="entry name" value="MR_MLE_C"/>
    <property type="match status" value="1"/>
</dbReference>
<dbReference type="SFLD" id="SFLDG00180">
    <property type="entry name" value="muconate_cycloisomerase"/>
    <property type="match status" value="1"/>
</dbReference>
<dbReference type="SFLD" id="SFLDF00009">
    <property type="entry name" value="o-succinylbenzoate_synthase"/>
    <property type="match status" value="1"/>
</dbReference>
<dbReference type="SMART" id="SM00922">
    <property type="entry name" value="MR_MLE"/>
    <property type="match status" value="1"/>
</dbReference>
<dbReference type="SUPFAM" id="SSF51604">
    <property type="entry name" value="Enolase C-terminal domain-like"/>
    <property type="match status" value="1"/>
</dbReference>
<dbReference type="SUPFAM" id="SSF54826">
    <property type="entry name" value="Enolase N-terminal domain-like"/>
    <property type="match status" value="1"/>
</dbReference>
<proteinExistence type="evidence at protein level"/>
<gene>
    <name evidence="1" type="primary">menC</name>
    <name type="ordered locus">b2261</name>
    <name type="ordered locus">JW2256</name>
</gene>
<evidence type="ECO:0000255" key="1">
    <source>
        <dbReference type="HAMAP-Rule" id="MF_00470"/>
    </source>
</evidence>
<evidence type="ECO:0000269" key="2">
    <source>
    </source>
</evidence>
<evidence type="ECO:0000269" key="3">
    <source>
    </source>
</evidence>
<evidence type="ECO:0000269" key="4">
    <source>
    </source>
</evidence>
<evidence type="ECO:0000303" key="5">
    <source>
    </source>
</evidence>
<evidence type="ECO:0000303" key="6">
    <source>
    </source>
</evidence>
<evidence type="ECO:0000305" key="7"/>
<evidence type="ECO:0007829" key="8">
    <source>
        <dbReference type="PDB" id="1FHU"/>
    </source>
</evidence>
<evidence type="ECO:0007829" key="9">
    <source>
        <dbReference type="PDB" id="1R6W"/>
    </source>
</evidence>
<name>MENC_ECOLI</name>
<protein>
    <recommendedName>
        <fullName evidence="1 6">o-succinylbenzoate synthase</fullName>
        <shortName evidence="1 7">OSB synthase</shortName>
        <shortName evidence="1 5">OSBS</shortName>
        <ecNumber evidence="1 2 4">4.2.1.113</ecNumber>
    </recommendedName>
    <alternativeName>
        <fullName evidence="1 7">4-(2'-carboxyphenyl)-4-oxybutyric acid synthase</fullName>
    </alternativeName>
    <alternativeName>
        <fullName evidence="1 7">o-succinylbenzoic acid synthase</fullName>
    </alternativeName>
</protein>
<accession>P29208</accession>
<accession>P76476</accession>
<accession>P76931</accession>